<dbReference type="EMBL" id="AC125472">
    <property type="protein sequence ID" value="AAO13482.1"/>
    <property type="molecule type" value="Genomic_DNA"/>
</dbReference>
<dbReference type="EMBL" id="AC126223">
    <property type="protein sequence ID" value="AAN65438.1"/>
    <property type="molecule type" value="Genomic_DNA"/>
</dbReference>
<dbReference type="EMBL" id="DP000009">
    <property type="protein sequence ID" value="ABF94309.1"/>
    <property type="molecule type" value="Genomic_DNA"/>
</dbReference>
<dbReference type="EMBL" id="AP008209">
    <property type="protein sequence ID" value="BAF11080.1"/>
    <property type="molecule type" value="Genomic_DNA"/>
</dbReference>
<dbReference type="EMBL" id="AP014959">
    <property type="status" value="NOT_ANNOTATED_CDS"/>
    <property type="molecule type" value="Genomic_DNA"/>
</dbReference>
<dbReference type="EMBL" id="CM000140">
    <property type="protein sequence ID" value="EAZ25816.1"/>
    <property type="molecule type" value="Genomic_DNA"/>
</dbReference>
<dbReference type="EMBL" id="AK070649">
    <property type="protein sequence ID" value="BAG92077.1"/>
    <property type="molecule type" value="mRNA"/>
</dbReference>
<dbReference type="RefSeq" id="XP_015629221.1">
    <property type="nucleotide sequence ID" value="XM_015773735.1"/>
</dbReference>
<dbReference type="SMR" id="Q8GSI0"/>
<dbReference type="FunCoup" id="Q8GSI0">
    <property type="interactions" value="22"/>
</dbReference>
<dbReference type="STRING" id="39947.Q8GSI0"/>
<dbReference type="PaxDb" id="39947-Q8GSI0"/>
<dbReference type="EnsemblPlants" id="Os03t0180800-01">
    <property type="protein sequence ID" value="Os03t0180800-01"/>
    <property type="gene ID" value="Os03g0180800"/>
</dbReference>
<dbReference type="Gramene" id="Os03t0180800-01">
    <property type="protein sequence ID" value="Os03t0180800-01"/>
    <property type="gene ID" value="Os03g0180800"/>
</dbReference>
<dbReference type="KEGG" id="dosa:Os03g0180800"/>
<dbReference type="eggNOG" id="ENOG502R5YE">
    <property type="taxonomic scope" value="Eukaryota"/>
</dbReference>
<dbReference type="HOGENOM" id="CLU_051749_3_2_1"/>
<dbReference type="InParanoid" id="Q8GSI0"/>
<dbReference type="OrthoDB" id="689737at2759"/>
<dbReference type="PlantReactome" id="R-OSA-6787011">
    <property type="pathway name" value="Jasmonic acid signaling"/>
</dbReference>
<dbReference type="Proteomes" id="UP000000763">
    <property type="component" value="Chromosome 3"/>
</dbReference>
<dbReference type="Proteomes" id="UP000007752">
    <property type="component" value="Chromosome 3"/>
</dbReference>
<dbReference type="Proteomes" id="UP000059680">
    <property type="component" value="Chromosome 3"/>
</dbReference>
<dbReference type="GO" id="GO:0005634">
    <property type="term" value="C:nucleus"/>
    <property type="evidence" value="ECO:0000318"/>
    <property type="project" value="GO_Central"/>
</dbReference>
<dbReference type="GO" id="GO:0031347">
    <property type="term" value="P:regulation of defense response"/>
    <property type="evidence" value="ECO:0000318"/>
    <property type="project" value="GO_Central"/>
</dbReference>
<dbReference type="GO" id="GO:2000022">
    <property type="term" value="P:regulation of jasmonic acid mediated signaling pathway"/>
    <property type="evidence" value="ECO:0000318"/>
    <property type="project" value="GO_Central"/>
</dbReference>
<dbReference type="GO" id="GO:0009611">
    <property type="term" value="P:response to wounding"/>
    <property type="evidence" value="ECO:0000318"/>
    <property type="project" value="GO_Central"/>
</dbReference>
<dbReference type="InterPro" id="IPR018467">
    <property type="entry name" value="CCT_CS"/>
</dbReference>
<dbReference type="InterPro" id="IPR040390">
    <property type="entry name" value="TIFY/JAZ"/>
</dbReference>
<dbReference type="InterPro" id="IPR010399">
    <property type="entry name" value="Tify_dom"/>
</dbReference>
<dbReference type="PANTHER" id="PTHR33077:SF59">
    <property type="entry name" value="PROTEIN TIFY 11A"/>
    <property type="match status" value="1"/>
</dbReference>
<dbReference type="PANTHER" id="PTHR33077">
    <property type="entry name" value="PROTEIN TIFY 4A-RELATED-RELATED"/>
    <property type="match status" value="1"/>
</dbReference>
<dbReference type="Pfam" id="PF09425">
    <property type="entry name" value="Jas_motif"/>
    <property type="match status" value="1"/>
</dbReference>
<dbReference type="Pfam" id="PF06200">
    <property type="entry name" value="tify"/>
    <property type="match status" value="1"/>
</dbReference>
<dbReference type="SMART" id="SM00979">
    <property type="entry name" value="TIFY"/>
    <property type="match status" value="1"/>
</dbReference>
<dbReference type="PROSITE" id="PS51320">
    <property type="entry name" value="TIFY"/>
    <property type="match status" value="1"/>
</dbReference>
<accession>Q8GSI0</accession>
<protein>
    <recommendedName>
        <fullName evidence="13">Protein TIFY 11a</fullName>
        <shortName evidence="11">OsTIFY11a</shortName>
    </recommendedName>
    <alternativeName>
        <fullName evidence="13">Jasmonate ZIM domain-containing protein 9</fullName>
        <shortName evidence="11">OsJAZ9</shortName>
    </alternativeName>
    <alternativeName>
        <fullName evidence="12">OsJAZ3</fullName>
    </alternativeName>
</protein>
<sequence>MASTDPMTRRFAVACGVLSQYVKANSSQPSTAAPVAQGVSGLMAAAAAAAAAPVVQEPGCEVDGGGQQFTIFYAGKVVVIDRCTPAMAAELMRFASAAQGGGGAPEAPPALVDMPIARKASLKRFLAKRKATPASARSSYVVRAAAAEEEQPPAKKAKAAVERREDWLALGSLGHMHSR</sequence>
<reference key="1">
    <citation type="journal article" date="2005" name="Genome Res.">
        <title>Sequence, annotation, and analysis of synteny between rice chromosome 3 and diverged grass species.</title>
        <authorList>
            <consortium name="The rice chromosome 3 sequencing consortium"/>
            <person name="Buell C.R."/>
            <person name="Yuan Q."/>
            <person name="Ouyang S."/>
            <person name="Liu J."/>
            <person name="Zhu W."/>
            <person name="Wang A."/>
            <person name="Maiti R."/>
            <person name="Haas B."/>
            <person name="Wortman J."/>
            <person name="Pertea M."/>
            <person name="Jones K.M."/>
            <person name="Kim M."/>
            <person name="Overton L."/>
            <person name="Tsitrin T."/>
            <person name="Fadrosh D."/>
            <person name="Bera J."/>
            <person name="Weaver B."/>
            <person name="Jin S."/>
            <person name="Johri S."/>
            <person name="Reardon M."/>
            <person name="Webb K."/>
            <person name="Hill J."/>
            <person name="Moffat K."/>
            <person name="Tallon L."/>
            <person name="Van Aken S."/>
            <person name="Lewis M."/>
            <person name="Utterback T."/>
            <person name="Feldblyum T."/>
            <person name="Zismann V."/>
            <person name="Iobst S."/>
            <person name="Hsiao J."/>
            <person name="de Vazeille A.R."/>
            <person name="Salzberg S.L."/>
            <person name="White O."/>
            <person name="Fraser C.M."/>
            <person name="Yu Y."/>
            <person name="Kim H."/>
            <person name="Rambo T."/>
            <person name="Currie J."/>
            <person name="Collura K."/>
            <person name="Kernodle-Thompson S."/>
            <person name="Wei F."/>
            <person name="Kudrna K."/>
            <person name="Ammiraju J.S.S."/>
            <person name="Luo M."/>
            <person name="Goicoechea J.L."/>
            <person name="Wing R.A."/>
            <person name="Henry D."/>
            <person name="Oates R."/>
            <person name="Palmer M."/>
            <person name="Pries G."/>
            <person name="Saski C."/>
            <person name="Simmons J."/>
            <person name="Soderlund C."/>
            <person name="Nelson W."/>
            <person name="de la Bastide M."/>
            <person name="Spiegel L."/>
            <person name="Nascimento L."/>
            <person name="Huang E."/>
            <person name="Preston R."/>
            <person name="Zutavern T."/>
            <person name="Palmer L."/>
            <person name="O'Shaughnessy A."/>
            <person name="Dike S."/>
            <person name="McCombie W.R."/>
            <person name="Minx P."/>
            <person name="Cordum H."/>
            <person name="Wilson R."/>
            <person name="Jin W."/>
            <person name="Lee H.R."/>
            <person name="Jiang J."/>
            <person name="Jackson S."/>
        </authorList>
    </citation>
    <scope>NUCLEOTIDE SEQUENCE [LARGE SCALE GENOMIC DNA]</scope>
    <source>
        <strain>cv. Nipponbare</strain>
    </source>
</reference>
<reference key="2">
    <citation type="journal article" date="2005" name="Nature">
        <title>The map-based sequence of the rice genome.</title>
        <authorList>
            <consortium name="International rice genome sequencing project (IRGSP)"/>
        </authorList>
    </citation>
    <scope>NUCLEOTIDE SEQUENCE [LARGE SCALE GENOMIC DNA]</scope>
    <source>
        <strain>cv. Nipponbare</strain>
    </source>
</reference>
<reference key="3">
    <citation type="journal article" date="2008" name="Nucleic Acids Res.">
        <title>The rice annotation project database (RAP-DB): 2008 update.</title>
        <authorList>
            <consortium name="The rice annotation project (RAP)"/>
        </authorList>
    </citation>
    <scope>GENOME REANNOTATION</scope>
    <source>
        <strain>cv. Nipponbare</strain>
    </source>
</reference>
<reference key="4">
    <citation type="journal article" date="2013" name="Rice">
        <title>Improvement of the Oryza sativa Nipponbare reference genome using next generation sequence and optical map data.</title>
        <authorList>
            <person name="Kawahara Y."/>
            <person name="de la Bastide M."/>
            <person name="Hamilton J.P."/>
            <person name="Kanamori H."/>
            <person name="McCombie W.R."/>
            <person name="Ouyang S."/>
            <person name="Schwartz D.C."/>
            <person name="Tanaka T."/>
            <person name="Wu J."/>
            <person name="Zhou S."/>
            <person name="Childs K.L."/>
            <person name="Davidson R.M."/>
            <person name="Lin H."/>
            <person name="Quesada-Ocampo L."/>
            <person name="Vaillancourt B."/>
            <person name="Sakai H."/>
            <person name="Lee S.S."/>
            <person name="Kim J."/>
            <person name="Numa H."/>
            <person name="Itoh T."/>
            <person name="Buell C.R."/>
            <person name="Matsumoto T."/>
        </authorList>
    </citation>
    <scope>GENOME REANNOTATION</scope>
    <source>
        <strain>cv. Nipponbare</strain>
    </source>
</reference>
<reference key="5">
    <citation type="journal article" date="2005" name="PLoS Biol.">
        <title>The genomes of Oryza sativa: a history of duplications.</title>
        <authorList>
            <person name="Yu J."/>
            <person name="Wang J."/>
            <person name="Lin W."/>
            <person name="Li S."/>
            <person name="Li H."/>
            <person name="Zhou J."/>
            <person name="Ni P."/>
            <person name="Dong W."/>
            <person name="Hu S."/>
            <person name="Zeng C."/>
            <person name="Zhang J."/>
            <person name="Zhang Y."/>
            <person name="Li R."/>
            <person name="Xu Z."/>
            <person name="Li S."/>
            <person name="Li X."/>
            <person name="Zheng H."/>
            <person name="Cong L."/>
            <person name="Lin L."/>
            <person name="Yin J."/>
            <person name="Geng J."/>
            <person name="Li G."/>
            <person name="Shi J."/>
            <person name="Liu J."/>
            <person name="Lv H."/>
            <person name="Li J."/>
            <person name="Wang J."/>
            <person name="Deng Y."/>
            <person name="Ran L."/>
            <person name="Shi X."/>
            <person name="Wang X."/>
            <person name="Wu Q."/>
            <person name="Li C."/>
            <person name="Ren X."/>
            <person name="Wang J."/>
            <person name="Wang X."/>
            <person name="Li D."/>
            <person name="Liu D."/>
            <person name="Zhang X."/>
            <person name="Ji Z."/>
            <person name="Zhao W."/>
            <person name="Sun Y."/>
            <person name="Zhang Z."/>
            <person name="Bao J."/>
            <person name="Han Y."/>
            <person name="Dong L."/>
            <person name="Ji J."/>
            <person name="Chen P."/>
            <person name="Wu S."/>
            <person name="Liu J."/>
            <person name="Xiao Y."/>
            <person name="Bu D."/>
            <person name="Tan J."/>
            <person name="Yang L."/>
            <person name="Ye C."/>
            <person name="Zhang J."/>
            <person name="Xu J."/>
            <person name="Zhou Y."/>
            <person name="Yu Y."/>
            <person name="Zhang B."/>
            <person name="Zhuang S."/>
            <person name="Wei H."/>
            <person name="Liu B."/>
            <person name="Lei M."/>
            <person name="Yu H."/>
            <person name="Li Y."/>
            <person name="Xu H."/>
            <person name="Wei S."/>
            <person name="He X."/>
            <person name="Fang L."/>
            <person name="Zhang Z."/>
            <person name="Zhang Y."/>
            <person name="Huang X."/>
            <person name="Su Z."/>
            <person name="Tong W."/>
            <person name="Li J."/>
            <person name="Tong Z."/>
            <person name="Li S."/>
            <person name="Ye J."/>
            <person name="Wang L."/>
            <person name="Fang L."/>
            <person name="Lei T."/>
            <person name="Chen C.-S."/>
            <person name="Chen H.-C."/>
            <person name="Xu Z."/>
            <person name="Li H."/>
            <person name="Huang H."/>
            <person name="Zhang F."/>
            <person name="Xu H."/>
            <person name="Li N."/>
            <person name="Zhao C."/>
            <person name="Li S."/>
            <person name="Dong L."/>
            <person name="Huang Y."/>
            <person name="Li L."/>
            <person name="Xi Y."/>
            <person name="Qi Q."/>
            <person name="Li W."/>
            <person name="Zhang B."/>
            <person name="Hu W."/>
            <person name="Zhang Y."/>
            <person name="Tian X."/>
            <person name="Jiao Y."/>
            <person name="Liang X."/>
            <person name="Jin J."/>
            <person name="Gao L."/>
            <person name="Zheng W."/>
            <person name="Hao B."/>
            <person name="Liu S.-M."/>
            <person name="Wang W."/>
            <person name="Yuan L."/>
            <person name="Cao M."/>
            <person name="McDermott J."/>
            <person name="Samudrala R."/>
            <person name="Wang J."/>
            <person name="Wong G.K.-S."/>
            <person name="Yang H."/>
        </authorList>
    </citation>
    <scope>NUCLEOTIDE SEQUENCE [LARGE SCALE GENOMIC DNA]</scope>
    <source>
        <strain>cv. Nipponbare</strain>
    </source>
</reference>
<reference key="6">
    <citation type="journal article" date="2003" name="Science">
        <title>Collection, mapping, and annotation of over 28,000 cDNA clones from japonica rice.</title>
        <authorList>
            <consortium name="The rice full-length cDNA consortium"/>
        </authorList>
    </citation>
    <scope>NUCLEOTIDE SEQUENCE [LARGE SCALE MRNA]</scope>
    <source>
        <strain>cv. Nipponbare</strain>
    </source>
</reference>
<reference key="7">
    <citation type="journal article" date="2009" name="Plant Mol. Biol.">
        <title>Identification and expression profiling analysis of TIFY family genes involved in stress and phytohormone responses in rice.</title>
        <authorList>
            <person name="Ye H."/>
            <person name="Du H."/>
            <person name="Tang N."/>
            <person name="Li X."/>
            <person name="Xiong L."/>
        </authorList>
    </citation>
    <scope>FUNCTION</scope>
    <scope>SUBCELLULAR LOCATION</scope>
    <scope>GENE FAMILY</scope>
    <scope>NOMENCLATURE</scope>
    <scope>INDUCTION</scope>
</reference>
<reference key="8">
    <citation type="journal article" date="2011" name="Plant J.">
        <title>OsbHLH148, a basic helix-loop-helix protein, interacts with OsJAZ proteins in a jasmonate signaling pathway leading to drought tolerance in rice.</title>
        <authorList>
            <person name="Seo J.S."/>
            <person name="Joo J."/>
            <person name="Kim M.J."/>
            <person name="Kim Y.K."/>
            <person name="Nahm B.H."/>
            <person name="Song S.I."/>
            <person name="Cheong J.J."/>
            <person name="Lee J.S."/>
            <person name="Kim J.K."/>
            <person name="Choi Y.D."/>
        </authorList>
    </citation>
    <scope>INTERACTION WITH BHLH148</scope>
</reference>
<reference key="9">
    <citation type="journal article" date="2013" name="Plant Cell">
        <title>RICE SALT SENSITIVE3 forms a ternary complex with JAZ and class-C bHLH factors and regulates jasmonate-induced gene expression and root cell elongation.</title>
        <authorList>
            <person name="Toda Y."/>
            <person name="Tanaka M."/>
            <person name="Ogawa D."/>
            <person name="Kurata K."/>
            <person name="Kurotani K."/>
            <person name="Habu Y."/>
            <person name="Ando T."/>
            <person name="Sugimoto K."/>
            <person name="Mitsuda N."/>
            <person name="Katoh E."/>
            <person name="Abe K."/>
            <person name="Miyao A."/>
            <person name="Hirochika H."/>
            <person name="Hattori T."/>
            <person name="Takeda S."/>
        </authorList>
    </citation>
    <scope>FUNCTION</scope>
    <scope>INTERACTION WITH RSS3</scope>
    <scope>SUBUNIT</scope>
    <source>
        <strain>cv. Nipponbare</strain>
    </source>
</reference>
<reference key="10">
    <citation type="journal article" date="2013" name="PLoS ONE">
        <title>Oryza sativa COI homologues restore jasmonate signal transduction in Arabidopsis coi1-1 mutants.</title>
        <authorList>
            <person name="Lee H.Y."/>
            <person name="Seo J.S."/>
            <person name="Cho J.H."/>
            <person name="Jung H."/>
            <person name="Kim J.K."/>
            <person name="Lee J.S."/>
            <person name="Rhee S."/>
            <person name="Do Choi Y."/>
        </authorList>
    </citation>
    <scope>INTERACTION WITH COI1A AND COI1B</scope>
</reference>
<reference key="11">
    <citation type="journal article" date="2015" name="Plant Sci.">
        <title>OsJAZ9 acts as a transcriptional regulator in jasmonate signaling and modulates salt stress tolerance in rice.</title>
        <authorList>
            <person name="Wu H."/>
            <person name="Ye H."/>
            <person name="Yao R."/>
            <person name="Zhang T."/>
            <person name="Xiong L."/>
        </authorList>
    </citation>
    <scope>FUNCTION</scope>
    <scope>INTERACTION WITH COI1A; BHLH062 AND NINJA1</scope>
</reference>
<reference key="12">
    <citation type="journal article" date="2017" name="Plant Physiol.">
        <title>The OsMYB30 transcription factor suppresses cold tolerance by interacting with a JAZ protein and suppressing beta-amylase expression.</title>
        <authorList>
            <person name="Lv Y."/>
            <person name="Yang M."/>
            <person name="Hu D."/>
            <person name="Yang Z."/>
            <person name="Ma S."/>
            <person name="Li X."/>
            <person name="Xiong L."/>
        </authorList>
    </citation>
    <scope>FUNCTION</scope>
    <scope>INTERACTION WITH MYB30</scope>
    <scope>SUBCELLULAR LOCATION</scope>
    <source>
        <strain>cv. Zhonghua 11</strain>
    </source>
</reference>
<name>TI11A_ORYSJ</name>
<evidence type="ECO:0000250" key="1">
    <source>
        <dbReference type="UniProtKB" id="Q7XPM8"/>
    </source>
</evidence>
<evidence type="ECO:0000255" key="2"/>
<evidence type="ECO:0000255" key="3">
    <source>
        <dbReference type="PROSITE-ProRule" id="PRU00650"/>
    </source>
</evidence>
<evidence type="ECO:0000255" key="4">
    <source>
        <dbReference type="PROSITE-ProRule" id="PRU00768"/>
    </source>
</evidence>
<evidence type="ECO:0000269" key="5">
    <source>
    </source>
</evidence>
<evidence type="ECO:0000269" key="6">
    <source>
    </source>
</evidence>
<evidence type="ECO:0000269" key="7">
    <source>
    </source>
</evidence>
<evidence type="ECO:0000269" key="8">
    <source>
    </source>
</evidence>
<evidence type="ECO:0000269" key="9">
    <source>
    </source>
</evidence>
<evidence type="ECO:0000269" key="10">
    <source>
    </source>
</evidence>
<evidence type="ECO:0000303" key="11">
    <source>
    </source>
</evidence>
<evidence type="ECO:0000303" key="12">
    <source>
    </source>
</evidence>
<evidence type="ECO:0000305" key="13"/>
<evidence type="ECO:0000312" key="14">
    <source>
        <dbReference type="EMBL" id="AAN65438.1"/>
    </source>
</evidence>
<evidence type="ECO:0000312" key="15">
    <source>
        <dbReference type="EMBL" id="AAO13482.1"/>
    </source>
</evidence>
<evidence type="ECO:0000312" key="16">
    <source>
        <dbReference type="EMBL" id="ABF94309.1"/>
    </source>
</evidence>
<evidence type="ECO:0000312" key="17">
    <source>
        <dbReference type="EMBL" id="BAF11080.1"/>
    </source>
</evidence>
<gene>
    <name evidence="11" type="primary">TIFY11A</name>
    <name evidence="11" type="synonym">JAZ9</name>
    <name evidence="17" type="ordered locus">Os03g0180800</name>
    <name evidence="16" type="ordered locus">LOC_Os03g08310</name>
    <name evidence="16" type="ORF">OsJ_09656</name>
    <name evidence="15" type="ORF">OSJNBa0050H14.22</name>
    <name evidence="14" type="ORF">OSJNBb0076N15.8</name>
</gene>
<organism>
    <name type="scientific">Oryza sativa subsp. japonica</name>
    <name type="common">Rice</name>
    <dbReference type="NCBI Taxonomy" id="39947"/>
    <lineage>
        <taxon>Eukaryota</taxon>
        <taxon>Viridiplantae</taxon>
        <taxon>Streptophyta</taxon>
        <taxon>Embryophyta</taxon>
        <taxon>Tracheophyta</taxon>
        <taxon>Spermatophyta</taxon>
        <taxon>Magnoliopsida</taxon>
        <taxon>Liliopsida</taxon>
        <taxon>Poales</taxon>
        <taxon>Poaceae</taxon>
        <taxon>BOP clade</taxon>
        <taxon>Oryzoideae</taxon>
        <taxon>Oryzeae</taxon>
        <taxon>Oryzinae</taxon>
        <taxon>Oryza</taxon>
        <taxon>Oryza sativa</taxon>
    </lineage>
</organism>
<feature type="chain" id="PRO_0000434853" description="Protein TIFY 11a">
    <location>
        <begin position="1"/>
        <end position="179"/>
    </location>
</feature>
<feature type="domain" description="Tify" evidence="3">
    <location>
        <begin position="62"/>
        <end position="97"/>
    </location>
</feature>
<feature type="short sequence motif" description="Jas" evidence="2">
    <location>
        <begin position="115"/>
        <end position="140"/>
    </location>
</feature>
<feature type="short sequence motif" description="Nuclear localization signal" evidence="4">
    <location>
        <begin position="117"/>
        <end position="124"/>
    </location>
</feature>
<comment type="function">
    <text evidence="5 8 9 10">Repressor of jasmonate (JA) responses. Forms a ternary complex with RSS3 and BHLH94 to negatively regulate JA-responsive genes (PubMed:23715469). Acts as a positive regulator of tolerance to salt stress (PubMed:19618278, PubMed:25617318). Involved in salt tolerance by modulating potassium homeostasis through JA signaling and regulation of the expression of potassium ion transporter genes. Acts as a transcriptional regulator targeted by the SCF(COI1) E3 ubiquitin ligase complexes in the JA signaling pathway, and interacts with BHLH062 that may directly regulate the ion transporter genes (PubMed:25617318). Acts as a positive regulator of tolerance to dehydration stress (PubMed:19618278). Acts as a negative regulator of tolerance to cold stress by interacting with MYB30 (PubMed:28062835).</text>
</comment>
<comment type="subunit">
    <text evidence="6 7 8 9 10">Interacts with BHLH148 (PubMed:21332845). Interacts with COI1A in a coronatine-dependent manner (PubMed:23320078, PubMed:25617318). Interacts with COI1B in a coronatine-dependent manner (PubMed:23320078). Coronatine is an analog of jasmonoyl isoleucine (JA-Ile) (PubMed:23320078). Interacts with RSS3. Forms a ternary complex with RSS3 and BHLH094 in the nucleus (PubMed:23715469). Interacts with BHLH062 and NINJA1 (PubMed:25617318). Interacts with MYB30 (PubMed:28062835).</text>
</comment>
<comment type="subcellular location">
    <subcellularLocation>
        <location evidence="4 5 10">Nucleus</location>
    </subcellularLocation>
</comment>
<comment type="induction">
    <text evidence="5">By jasmonate, wounding, and cold, drought and salt stresses. Down-regulated by abscisic acid (ABA).</text>
</comment>
<comment type="domain">
    <text evidence="1">The jas domain (115-140) is required for interaction with COI1.</text>
</comment>
<comment type="PTM">
    <text evidence="1">Ubiquitinated. Targeted for degradation by the SCF(COI1) E3 ubiquitin ligase-proteasome pathway during jasmonate signaling.</text>
</comment>
<comment type="miscellaneous">
    <text evidence="5 9 10">Plants over-expressing TIFY11A/JAZ9 display increased tolerance to salt and dehydration stresses (PubMed:19618278). Plants silencing TIFY11A/JAZ9 exhibit decreased tolerance to salt stress (PubMed:25617318). Plants over-expressing TIFY11A/JAZ9 display decreased tolerance to cold stress (PubMed:28062835).</text>
</comment>
<comment type="similarity">
    <text evidence="13">Belongs to the TIFY/JAZ family.</text>
</comment>
<proteinExistence type="evidence at protein level"/>
<keyword id="KW-1184">Jasmonic acid signaling pathway</keyword>
<keyword id="KW-0539">Nucleus</keyword>
<keyword id="KW-1185">Reference proteome</keyword>
<keyword id="KW-0346">Stress response</keyword>
<keyword id="KW-0804">Transcription</keyword>
<keyword id="KW-0805">Transcription regulation</keyword>
<keyword id="KW-0832">Ubl conjugation</keyword>